<sequence>MKLKDTLNLGKTAFPMRAGLPTKEPVWQKEWEDAKLYQRRQELNEGKPHFVLHDGPPYANGNIHVGHAMNHISKDIIIRSKSMSGFNAPYIPGWDTHGLPIEQVLAKQGVKRKEMDLVEYLKLCREYALSQVYKQRDDFKRLGMSGDWENLYVTLTPDYEAAQIRVFGEMANKGYIYRGAKPVYWSWSSESALAEAEIEYHDLVSTSLYYANKVKDGKGILDTDTYIVVWTTTPFTITASRGLTVGADIDYVLVQPASETRKFVVAAELLTSLSEKFGWADVQVLATYRGQELNHIVTEHPWDTAVDELVILGDHVTTDSGTGIVHTAPGFGEDDYNVGIANGLEVAVTVDERGIMMANAGPEFEGQFYDKVVPTVIEKLGNLLLAQEEISHSYPFDWRTKKPIIWRAVPQWFASVSKFRQEILDAIDKVKFHTEWGKVRLYNMIRDRGDWVISRQRAWGVPLPIFYAEDGTAIMTAETIEHVAQLFEVHGSSIWWERDAKNLLPEGFTHPGSPNGEFKKETDIMDVWFDSGSSWNGVLVNRPNLTYPADLYLEGSDQYRGWFNSSLITSVANHGVAPYKQILSQGFTLDGKGEKMSKSLGNTIAPSDVEKQFGAEILRLWVTSVDSSNDVRISMDILSQVSETYRKIRNTLRFLIANTSDFNPAQDVVAYDELRSVDKYMTIRFNQLVKTIRDAYADFEFLTIYKALVNFINVDLSAFYLDFAKDVVYIEGAKSLERRQMQTVFYDILVKITKLLTPILPHTAEEIWSYLEFEAEDFVQLSELPEAQTFANQEEVLDTWAAFMDFRGQAQKALEEARNAKVIGKSLEAHLTVYPNEVVKTLLEAVNSNVAQLLIVSDLTIAEGPAPEAAVSFEDVAFTVERAAGQVCDRCRRIDPTTAERSYQAVICDHCASIVEENFAEAVAEGFEEK</sequence>
<proteinExistence type="inferred from homology"/>
<protein>
    <recommendedName>
        <fullName evidence="1">Isoleucine--tRNA ligase</fullName>
        <ecNumber evidence="1">6.1.1.5</ecNumber>
    </recommendedName>
    <alternativeName>
        <fullName evidence="1">Isoleucyl-tRNA synthetase</fullName>
        <shortName evidence="1">IleRS</shortName>
    </alternativeName>
</protein>
<feature type="chain" id="PRO_1000189206" description="Isoleucine--tRNA ligase">
    <location>
        <begin position="1"/>
        <end position="930"/>
    </location>
</feature>
<feature type="short sequence motif" description="'HIGH' region">
    <location>
        <begin position="57"/>
        <end position="67"/>
    </location>
</feature>
<feature type="short sequence motif" description="'KMSKS' region">
    <location>
        <begin position="595"/>
        <end position="599"/>
    </location>
</feature>
<feature type="binding site" evidence="1">
    <location>
        <position position="554"/>
    </location>
    <ligand>
        <name>L-isoleucyl-5'-AMP</name>
        <dbReference type="ChEBI" id="CHEBI:178002"/>
    </ligand>
</feature>
<feature type="binding site" evidence="1">
    <location>
        <position position="598"/>
    </location>
    <ligand>
        <name>ATP</name>
        <dbReference type="ChEBI" id="CHEBI:30616"/>
    </ligand>
</feature>
<feature type="binding site" evidence="1">
    <location>
        <position position="888"/>
    </location>
    <ligand>
        <name>Zn(2+)</name>
        <dbReference type="ChEBI" id="CHEBI:29105"/>
    </ligand>
</feature>
<feature type="binding site" evidence="1">
    <location>
        <position position="891"/>
    </location>
    <ligand>
        <name>Zn(2+)</name>
        <dbReference type="ChEBI" id="CHEBI:29105"/>
    </ligand>
</feature>
<feature type="binding site" evidence="1">
    <location>
        <position position="908"/>
    </location>
    <ligand>
        <name>Zn(2+)</name>
        <dbReference type="ChEBI" id="CHEBI:29105"/>
    </ligand>
</feature>
<feature type="binding site" evidence="1">
    <location>
        <position position="911"/>
    </location>
    <ligand>
        <name>Zn(2+)</name>
        <dbReference type="ChEBI" id="CHEBI:29105"/>
    </ligand>
</feature>
<name>SYI_STRZP</name>
<keyword id="KW-0030">Aminoacyl-tRNA synthetase</keyword>
<keyword id="KW-0067">ATP-binding</keyword>
<keyword id="KW-0963">Cytoplasm</keyword>
<keyword id="KW-0436">Ligase</keyword>
<keyword id="KW-0479">Metal-binding</keyword>
<keyword id="KW-0547">Nucleotide-binding</keyword>
<keyword id="KW-0648">Protein biosynthesis</keyword>
<keyword id="KW-0862">Zinc</keyword>
<gene>
    <name evidence="1" type="primary">ileS</name>
    <name type="ordered locus">SPP_1677</name>
</gene>
<reference key="1">
    <citation type="journal article" date="2010" name="Genome Biol.">
        <title>Structure and dynamics of the pan-genome of Streptococcus pneumoniae and closely related species.</title>
        <authorList>
            <person name="Donati C."/>
            <person name="Hiller N.L."/>
            <person name="Tettelin H."/>
            <person name="Muzzi A."/>
            <person name="Croucher N.J."/>
            <person name="Angiuoli S.V."/>
            <person name="Oggioni M."/>
            <person name="Dunning Hotopp J.C."/>
            <person name="Hu F.Z."/>
            <person name="Riley D.R."/>
            <person name="Covacci A."/>
            <person name="Mitchell T.J."/>
            <person name="Bentley S.D."/>
            <person name="Kilian M."/>
            <person name="Ehrlich G.D."/>
            <person name="Rappuoli R."/>
            <person name="Moxon E.R."/>
            <person name="Masignani V."/>
        </authorList>
    </citation>
    <scope>NUCLEOTIDE SEQUENCE [LARGE SCALE GENOMIC DNA]</scope>
    <source>
        <strain>P1031</strain>
    </source>
</reference>
<dbReference type="EC" id="6.1.1.5" evidence="1"/>
<dbReference type="EMBL" id="CP000920">
    <property type="protein sequence ID" value="ACO22101.1"/>
    <property type="molecule type" value="Genomic_DNA"/>
</dbReference>
<dbReference type="RefSeq" id="WP_000768043.1">
    <property type="nucleotide sequence ID" value="NC_012467.1"/>
</dbReference>
<dbReference type="SMR" id="C1CLZ8"/>
<dbReference type="KEGG" id="spp:SPP_1677"/>
<dbReference type="HOGENOM" id="CLU_001493_7_1_9"/>
<dbReference type="GO" id="GO:0005829">
    <property type="term" value="C:cytosol"/>
    <property type="evidence" value="ECO:0007669"/>
    <property type="project" value="TreeGrafter"/>
</dbReference>
<dbReference type="GO" id="GO:0002161">
    <property type="term" value="F:aminoacyl-tRNA deacylase activity"/>
    <property type="evidence" value="ECO:0007669"/>
    <property type="project" value="InterPro"/>
</dbReference>
<dbReference type="GO" id="GO:0005524">
    <property type="term" value="F:ATP binding"/>
    <property type="evidence" value="ECO:0007669"/>
    <property type="project" value="UniProtKB-UniRule"/>
</dbReference>
<dbReference type="GO" id="GO:0004822">
    <property type="term" value="F:isoleucine-tRNA ligase activity"/>
    <property type="evidence" value="ECO:0007669"/>
    <property type="project" value="UniProtKB-UniRule"/>
</dbReference>
<dbReference type="GO" id="GO:0000049">
    <property type="term" value="F:tRNA binding"/>
    <property type="evidence" value="ECO:0007669"/>
    <property type="project" value="InterPro"/>
</dbReference>
<dbReference type="GO" id="GO:0008270">
    <property type="term" value="F:zinc ion binding"/>
    <property type="evidence" value="ECO:0007669"/>
    <property type="project" value="UniProtKB-UniRule"/>
</dbReference>
<dbReference type="GO" id="GO:0006428">
    <property type="term" value="P:isoleucyl-tRNA aminoacylation"/>
    <property type="evidence" value="ECO:0007669"/>
    <property type="project" value="UniProtKB-UniRule"/>
</dbReference>
<dbReference type="CDD" id="cd07960">
    <property type="entry name" value="Anticodon_Ia_Ile_BEm"/>
    <property type="match status" value="1"/>
</dbReference>
<dbReference type="CDD" id="cd00818">
    <property type="entry name" value="IleRS_core"/>
    <property type="match status" value="1"/>
</dbReference>
<dbReference type="FunFam" id="1.10.10.830:FF:000001">
    <property type="entry name" value="Isoleucine--tRNA ligase"/>
    <property type="match status" value="1"/>
</dbReference>
<dbReference type="FunFam" id="1.10.730.20:FF:000001">
    <property type="entry name" value="Isoleucine--tRNA ligase"/>
    <property type="match status" value="1"/>
</dbReference>
<dbReference type="FunFam" id="3.40.50.620:FF:000092">
    <property type="entry name" value="Isoleucine--tRNA ligase"/>
    <property type="match status" value="1"/>
</dbReference>
<dbReference type="FunFam" id="3.90.740.10:FF:000006">
    <property type="entry name" value="Isoleucine--tRNA ligase"/>
    <property type="match status" value="1"/>
</dbReference>
<dbReference type="Gene3D" id="1.10.730.20">
    <property type="match status" value="1"/>
</dbReference>
<dbReference type="Gene3D" id="3.40.50.620">
    <property type="entry name" value="HUPs"/>
    <property type="match status" value="2"/>
</dbReference>
<dbReference type="Gene3D" id="1.10.10.830">
    <property type="entry name" value="Ile-tRNA synthetase CP2 domain-like"/>
    <property type="match status" value="1"/>
</dbReference>
<dbReference type="Gene3D" id="3.90.740.10">
    <property type="entry name" value="Valyl/Leucyl/Isoleucyl-tRNA synthetase, editing domain"/>
    <property type="match status" value="1"/>
</dbReference>
<dbReference type="HAMAP" id="MF_02002">
    <property type="entry name" value="Ile_tRNA_synth_type1"/>
    <property type="match status" value="1"/>
</dbReference>
<dbReference type="InterPro" id="IPR001412">
    <property type="entry name" value="aa-tRNA-synth_I_CS"/>
</dbReference>
<dbReference type="InterPro" id="IPR002300">
    <property type="entry name" value="aa-tRNA-synth_Ia"/>
</dbReference>
<dbReference type="InterPro" id="IPR033708">
    <property type="entry name" value="Anticodon_Ile_BEm"/>
</dbReference>
<dbReference type="InterPro" id="IPR002301">
    <property type="entry name" value="Ile-tRNA-ligase"/>
</dbReference>
<dbReference type="InterPro" id="IPR023585">
    <property type="entry name" value="Ile-tRNA-ligase_type1"/>
</dbReference>
<dbReference type="InterPro" id="IPR050081">
    <property type="entry name" value="Ile-tRNA_ligase"/>
</dbReference>
<dbReference type="InterPro" id="IPR013155">
    <property type="entry name" value="M/V/L/I-tRNA-synth_anticd-bd"/>
</dbReference>
<dbReference type="InterPro" id="IPR014729">
    <property type="entry name" value="Rossmann-like_a/b/a_fold"/>
</dbReference>
<dbReference type="InterPro" id="IPR009080">
    <property type="entry name" value="tRNAsynth_Ia_anticodon-bd"/>
</dbReference>
<dbReference type="InterPro" id="IPR009008">
    <property type="entry name" value="Val/Leu/Ile-tRNA-synth_edit"/>
</dbReference>
<dbReference type="InterPro" id="IPR010663">
    <property type="entry name" value="Znf_FPG/IleRS"/>
</dbReference>
<dbReference type="NCBIfam" id="TIGR00392">
    <property type="entry name" value="ileS"/>
    <property type="match status" value="1"/>
</dbReference>
<dbReference type="PANTHER" id="PTHR42765:SF1">
    <property type="entry name" value="ISOLEUCINE--TRNA LIGASE, MITOCHONDRIAL"/>
    <property type="match status" value="1"/>
</dbReference>
<dbReference type="PANTHER" id="PTHR42765">
    <property type="entry name" value="SOLEUCYL-TRNA SYNTHETASE"/>
    <property type="match status" value="1"/>
</dbReference>
<dbReference type="Pfam" id="PF08264">
    <property type="entry name" value="Anticodon_1"/>
    <property type="match status" value="1"/>
</dbReference>
<dbReference type="Pfam" id="PF00133">
    <property type="entry name" value="tRNA-synt_1"/>
    <property type="match status" value="1"/>
</dbReference>
<dbReference type="Pfam" id="PF06827">
    <property type="entry name" value="zf-FPG_IleRS"/>
    <property type="match status" value="1"/>
</dbReference>
<dbReference type="PRINTS" id="PR00984">
    <property type="entry name" value="TRNASYNTHILE"/>
</dbReference>
<dbReference type="SUPFAM" id="SSF47323">
    <property type="entry name" value="Anticodon-binding domain of a subclass of class I aminoacyl-tRNA synthetases"/>
    <property type="match status" value="1"/>
</dbReference>
<dbReference type="SUPFAM" id="SSF52374">
    <property type="entry name" value="Nucleotidylyl transferase"/>
    <property type="match status" value="1"/>
</dbReference>
<dbReference type="SUPFAM" id="SSF50677">
    <property type="entry name" value="ValRS/IleRS/LeuRS editing domain"/>
    <property type="match status" value="1"/>
</dbReference>
<dbReference type="PROSITE" id="PS00178">
    <property type="entry name" value="AA_TRNA_LIGASE_I"/>
    <property type="match status" value="1"/>
</dbReference>
<accession>C1CLZ8</accession>
<comment type="function">
    <text evidence="1">Catalyzes the attachment of isoleucine to tRNA(Ile). As IleRS can inadvertently accommodate and process structurally similar amino acids such as valine, to avoid such errors it has two additional distinct tRNA(Ile)-dependent editing activities. One activity is designated as 'pretransfer' editing and involves the hydrolysis of activated Val-AMP. The other activity is designated 'posttransfer' editing and involves deacylation of mischarged Val-tRNA(Ile).</text>
</comment>
<comment type="catalytic activity">
    <reaction evidence="1">
        <text>tRNA(Ile) + L-isoleucine + ATP = L-isoleucyl-tRNA(Ile) + AMP + diphosphate</text>
        <dbReference type="Rhea" id="RHEA:11060"/>
        <dbReference type="Rhea" id="RHEA-COMP:9666"/>
        <dbReference type="Rhea" id="RHEA-COMP:9695"/>
        <dbReference type="ChEBI" id="CHEBI:30616"/>
        <dbReference type="ChEBI" id="CHEBI:33019"/>
        <dbReference type="ChEBI" id="CHEBI:58045"/>
        <dbReference type="ChEBI" id="CHEBI:78442"/>
        <dbReference type="ChEBI" id="CHEBI:78528"/>
        <dbReference type="ChEBI" id="CHEBI:456215"/>
        <dbReference type="EC" id="6.1.1.5"/>
    </reaction>
</comment>
<comment type="cofactor">
    <cofactor evidence="1">
        <name>Zn(2+)</name>
        <dbReference type="ChEBI" id="CHEBI:29105"/>
    </cofactor>
    <text evidence="1">Binds 1 zinc ion per subunit.</text>
</comment>
<comment type="subunit">
    <text evidence="1">Monomer.</text>
</comment>
<comment type="subcellular location">
    <subcellularLocation>
        <location evidence="1">Cytoplasm</location>
    </subcellularLocation>
</comment>
<comment type="domain">
    <text evidence="1">IleRS has two distinct active sites: one for aminoacylation and one for editing. The misactivated valine is translocated from the active site to the editing site, which sterically excludes the correctly activated isoleucine. The single editing site contains two valyl binding pockets, one specific for each substrate (Val-AMP or Val-tRNA(Ile)).</text>
</comment>
<comment type="similarity">
    <text evidence="1">Belongs to the class-I aminoacyl-tRNA synthetase family. IleS type 1 subfamily.</text>
</comment>
<evidence type="ECO:0000255" key="1">
    <source>
        <dbReference type="HAMAP-Rule" id="MF_02002"/>
    </source>
</evidence>
<organism>
    <name type="scientific">Streptococcus pneumoniae (strain P1031)</name>
    <dbReference type="NCBI Taxonomy" id="488223"/>
    <lineage>
        <taxon>Bacteria</taxon>
        <taxon>Bacillati</taxon>
        <taxon>Bacillota</taxon>
        <taxon>Bacilli</taxon>
        <taxon>Lactobacillales</taxon>
        <taxon>Streptococcaceae</taxon>
        <taxon>Streptococcus</taxon>
    </lineage>
</organism>